<comment type="function">
    <text evidence="1">APOE is an apolipoprotein, a protein associating with lipid particles, that mainly functions in lipoprotein-mediated lipid transport between organs via the plasma and interstitial fluids. APOE is a core component of plasma lipoproteins and is involved in their production, conversion and clearance. Apolipoproteins are amphipathic molecules that interact both with lipids of the lipoprotein particle core and the aqueous environment of the plasma. As such, APOE associates with chylomicrons, chylomicron remnants, very low density lipoproteins (VLDL) and intermediate density lipoproteins (IDL) but shows a preferential binding to high-density lipoproteins (HDL). It also binds a wide range of cellular receptors including the LDL receptor/LDLR, the LDL receptor-related proteins LRP1, LRP2 and LRP8 and the very low-density lipoprotein receptor/VLDLR that mediate the cellular uptake of the APOE-containing lipoprotein particles. Finally, APOE also has a heparin-binding activity and binds heparan-sulfate proteoglycans on the surface of cells, a property that supports the capture and the receptor-mediated uptake of APOE-containing lipoproteins by cells. A main function of APOE is to mediate lipoprotein clearance through the uptake of chylomicrons, VLDLs, and HDLs by hepatocytes. APOE is also involved in the biosynthesis by the liver of VLDLs as well as their uptake by peripheral tissues ensuring the delivery of triglycerides and energy storage in muscle, heart and adipose tissues. By participating in the lipoprotein-mediated distribution of lipids among tissues, APOE plays a critical role in plasma and tissues lipid homeostasis. APOE is also involved in two steps of reverse cholesterol transport, the HDLs-mediated transport of cholesterol from peripheral tissues to the liver, and thereby plays an important role in cholesterol homeostasis. First, it is functionally associated with ABCA1 in the biogenesis of HDLs in tissues. Second, it is enriched in circulating HDLs and mediates their uptake by hepatocytes. APOE also plays an important role in lipid transport in the central nervous system, regulating neuron survival and sprouting.</text>
</comment>
<comment type="subunit">
    <text evidence="1">Homotetramer. May interact with ABCA1; functionally associated with ABCA1 in the biogenesis of HDLs. May interact with APP/A4 amyloid-beta peptide; the interaction is extremely stable in vitro but its physiological significance is unclear. May interact with MAPT. May interact with MAP2. In the cerebrospinal fluid, interacts with secreted SORL1. Interacts with PMEL; this allows the loading of PMEL luminal fragment on ILVs to induce fibril nucleation.</text>
</comment>
<comment type="subcellular location">
    <subcellularLocation>
        <location evidence="1">Secreted</location>
    </subcellularLocation>
    <subcellularLocation>
        <location evidence="1">Secreted</location>
        <location evidence="1">Extracellular space</location>
    </subcellularLocation>
    <subcellularLocation>
        <location evidence="1">Secreted</location>
        <location evidence="1">Extracellular space</location>
        <location evidence="1">Extracellular matrix</location>
    </subcellularLocation>
    <subcellularLocation>
        <location evidence="1">Extracellular vesicle</location>
    </subcellularLocation>
    <subcellularLocation>
        <location evidence="1">Endosome</location>
        <location evidence="1">Multivesicular body</location>
    </subcellularLocation>
    <text evidence="1">In the plasma, APOE is associated with chylomicrons, chylomicrons remnants, VLDL, LDL and HDL lipoproteins. Lipid poor oligomeric APOE is associated with the extracellular matrix in a calcium- and heparan-sulfate proteoglycans-dependent manner. Lipidation induces the release from the extracellular matrix. Colocalizes with CD63 and PMEL at exosomes and in intraluminal vesicles within multivesicular endosomes.</text>
</comment>
<comment type="PTM">
    <text evidence="1">APOE exists as multiple glycosylated and sialylated glycoforms within cells and in plasma. The extent of glycosylation and sialylation are tissue and context specific.</text>
</comment>
<comment type="PTM">
    <text evidence="1">Glycated in plasma VLDL.</text>
</comment>
<comment type="PTM">
    <text evidence="1">Phosphorylated by FAM20C in the extracellular medium.</text>
</comment>
<comment type="similarity">
    <text evidence="4">Belongs to the apolipoprotein A1/A4/E family.</text>
</comment>
<protein>
    <recommendedName>
        <fullName>Apolipoprotein E</fullName>
        <shortName>Apo-E</shortName>
    </recommendedName>
</protein>
<proteinExistence type="evidence at transcript level"/>
<dbReference type="EMBL" id="CM001271">
    <property type="protein sequence ID" value="EHH30133.1"/>
    <property type="molecule type" value="Genomic_DNA"/>
</dbReference>
<dbReference type="EMBL" id="U52030">
    <property type="protein sequence ID" value="AAC50441.1"/>
    <property type="molecule type" value="mRNA"/>
</dbReference>
<dbReference type="SMR" id="Q28502"/>
<dbReference type="STRING" id="9544.ENSMMUP00000048554"/>
<dbReference type="eggNOG" id="ENOG502QVD6">
    <property type="taxonomic scope" value="Eukaryota"/>
</dbReference>
<dbReference type="HOGENOM" id="CLU_066029_0_1_1"/>
<dbReference type="InParanoid" id="Q28502"/>
<dbReference type="Proteomes" id="UP000006718">
    <property type="component" value="Unassembled WGS sequence"/>
</dbReference>
<dbReference type="Proteomes" id="UP000013456">
    <property type="component" value="Chromosome 19"/>
</dbReference>
<dbReference type="GO" id="GO:0042627">
    <property type="term" value="C:chylomicron"/>
    <property type="evidence" value="ECO:0000318"/>
    <property type="project" value="GO_Central"/>
</dbReference>
<dbReference type="GO" id="GO:0070062">
    <property type="term" value="C:extracellular exosome"/>
    <property type="evidence" value="ECO:0000250"/>
    <property type="project" value="UniProtKB"/>
</dbReference>
<dbReference type="GO" id="GO:0031012">
    <property type="term" value="C:extracellular matrix"/>
    <property type="evidence" value="ECO:0000250"/>
    <property type="project" value="UniProtKB"/>
</dbReference>
<dbReference type="GO" id="GO:0005615">
    <property type="term" value="C:extracellular space"/>
    <property type="evidence" value="ECO:0000250"/>
    <property type="project" value="UniProtKB"/>
</dbReference>
<dbReference type="GO" id="GO:1903561">
    <property type="term" value="C:extracellular vesicle"/>
    <property type="evidence" value="ECO:0000318"/>
    <property type="project" value="GO_Central"/>
</dbReference>
<dbReference type="GO" id="GO:0034364">
    <property type="term" value="C:high-density lipoprotein particle"/>
    <property type="evidence" value="ECO:0000250"/>
    <property type="project" value="UniProtKB"/>
</dbReference>
<dbReference type="GO" id="GO:0034363">
    <property type="term" value="C:intermediate-density lipoprotein particle"/>
    <property type="evidence" value="ECO:0000250"/>
    <property type="project" value="UniProtKB"/>
</dbReference>
<dbReference type="GO" id="GO:0034362">
    <property type="term" value="C:low-density lipoprotein particle"/>
    <property type="evidence" value="ECO:0000250"/>
    <property type="project" value="UniProtKB"/>
</dbReference>
<dbReference type="GO" id="GO:0097487">
    <property type="term" value="C:multivesicular body, internal vesicle"/>
    <property type="evidence" value="ECO:0000250"/>
    <property type="project" value="UniProtKB"/>
</dbReference>
<dbReference type="GO" id="GO:0034361">
    <property type="term" value="C:very-low-density lipoprotein particle"/>
    <property type="evidence" value="ECO:0000250"/>
    <property type="project" value="UniProtKB"/>
</dbReference>
<dbReference type="GO" id="GO:0120020">
    <property type="term" value="F:cholesterol transfer activity"/>
    <property type="evidence" value="ECO:0000318"/>
    <property type="project" value="GO_Central"/>
</dbReference>
<dbReference type="GO" id="GO:0043395">
    <property type="term" value="F:heparan sulfate proteoglycan binding"/>
    <property type="evidence" value="ECO:0000250"/>
    <property type="project" value="UniProtKB"/>
</dbReference>
<dbReference type="GO" id="GO:0008201">
    <property type="term" value="F:heparin binding"/>
    <property type="evidence" value="ECO:0000250"/>
    <property type="project" value="UniProtKB"/>
</dbReference>
<dbReference type="GO" id="GO:0042802">
    <property type="term" value="F:identical protein binding"/>
    <property type="evidence" value="ECO:0000250"/>
    <property type="project" value="UniProtKB"/>
</dbReference>
<dbReference type="GO" id="GO:0050750">
    <property type="term" value="F:low-density lipoprotein particle receptor binding"/>
    <property type="evidence" value="ECO:0000250"/>
    <property type="project" value="UniProtKB"/>
</dbReference>
<dbReference type="GO" id="GO:0060228">
    <property type="term" value="F:phosphatidylcholine-sterol O-acyltransferase activator activity"/>
    <property type="evidence" value="ECO:0000318"/>
    <property type="project" value="GO_Central"/>
</dbReference>
<dbReference type="GO" id="GO:0005543">
    <property type="term" value="F:phospholipid binding"/>
    <property type="evidence" value="ECO:0000318"/>
    <property type="project" value="GO_Central"/>
</dbReference>
<dbReference type="GO" id="GO:0055090">
    <property type="term" value="P:acylglycerol homeostasis"/>
    <property type="evidence" value="ECO:0000318"/>
    <property type="project" value="GO_Central"/>
</dbReference>
<dbReference type="GO" id="GO:0033344">
    <property type="term" value="P:cholesterol efflux"/>
    <property type="evidence" value="ECO:0000250"/>
    <property type="project" value="UniProtKB"/>
</dbReference>
<dbReference type="GO" id="GO:0008203">
    <property type="term" value="P:cholesterol metabolic process"/>
    <property type="evidence" value="ECO:0000318"/>
    <property type="project" value="GO_Central"/>
</dbReference>
<dbReference type="GO" id="GO:0034382">
    <property type="term" value="P:chylomicron remnant clearance"/>
    <property type="evidence" value="ECO:0000250"/>
    <property type="project" value="UniProtKB"/>
</dbReference>
<dbReference type="GO" id="GO:0034380">
    <property type="term" value="P:high-density lipoprotein particle assembly"/>
    <property type="evidence" value="ECO:0000250"/>
    <property type="project" value="UniProtKB"/>
</dbReference>
<dbReference type="GO" id="GO:0071831">
    <property type="term" value="P:intermediate-density lipoprotein particle clearance"/>
    <property type="evidence" value="ECO:0000250"/>
    <property type="project" value="UniProtKB"/>
</dbReference>
<dbReference type="GO" id="GO:0042158">
    <property type="term" value="P:lipoprotein biosynthetic process"/>
    <property type="evidence" value="ECO:0000250"/>
    <property type="project" value="UniProtKB"/>
</dbReference>
<dbReference type="GO" id="GO:0032438">
    <property type="term" value="P:melanosome organization"/>
    <property type="evidence" value="ECO:0000250"/>
    <property type="project" value="UniProtKB"/>
</dbReference>
<dbReference type="GO" id="GO:1905907">
    <property type="term" value="P:negative regulation of amyloid fibril formation"/>
    <property type="evidence" value="ECO:0000250"/>
    <property type="project" value="UniProtKB"/>
</dbReference>
<dbReference type="GO" id="GO:0031175">
    <property type="term" value="P:neuron projection development"/>
    <property type="evidence" value="ECO:0000250"/>
    <property type="project" value="UniProtKB"/>
</dbReference>
<dbReference type="GO" id="GO:0033700">
    <property type="term" value="P:phospholipid efflux"/>
    <property type="evidence" value="ECO:0000318"/>
    <property type="project" value="GO_Central"/>
</dbReference>
<dbReference type="GO" id="GO:1900223">
    <property type="term" value="P:positive regulation of amyloid-beta clearance"/>
    <property type="evidence" value="ECO:0000250"/>
    <property type="project" value="UniProtKB"/>
</dbReference>
<dbReference type="GO" id="GO:0071830">
    <property type="term" value="P:triglyceride-rich lipoprotein particle clearance"/>
    <property type="evidence" value="ECO:0000250"/>
    <property type="project" value="UniProtKB"/>
</dbReference>
<dbReference type="GO" id="GO:0034447">
    <property type="term" value="P:very-low-density lipoprotein particle clearance"/>
    <property type="evidence" value="ECO:0000250"/>
    <property type="project" value="UniProtKB"/>
</dbReference>
<dbReference type="FunFam" id="1.20.120.20:FF:000002">
    <property type="entry name" value="Apolipoprotein E"/>
    <property type="match status" value="1"/>
</dbReference>
<dbReference type="FunFam" id="1.20.120.20:FF:000003">
    <property type="entry name" value="Apolipoprotein E"/>
    <property type="match status" value="1"/>
</dbReference>
<dbReference type="Gene3D" id="1.20.120.20">
    <property type="entry name" value="Apolipoprotein"/>
    <property type="match status" value="2"/>
</dbReference>
<dbReference type="InterPro" id="IPR000074">
    <property type="entry name" value="ApoA_E"/>
</dbReference>
<dbReference type="InterPro" id="IPR050163">
    <property type="entry name" value="Apolipoprotein_A1/A4/E"/>
</dbReference>
<dbReference type="PANTHER" id="PTHR18976">
    <property type="entry name" value="APOLIPOPROTEIN"/>
    <property type="match status" value="1"/>
</dbReference>
<dbReference type="PANTHER" id="PTHR18976:SF2">
    <property type="entry name" value="APOLIPOPROTEIN E"/>
    <property type="match status" value="1"/>
</dbReference>
<dbReference type="Pfam" id="PF01442">
    <property type="entry name" value="Apolipoprotein"/>
    <property type="match status" value="1"/>
</dbReference>
<dbReference type="SUPFAM" id="SSF58113">
    <property type="entry name" value="Apolipoprotein A-I"/>
    <property type="match status" value="1"/>
</dbReference>
<evidence type="ECO:0000250" key="1">
    <source>
        <dbReference type="UniProtKB" id="P02649"/>
    </source>
</evidence>
<evidence type="ECO:0000250" key="2">
    <source>
        <dbReference type="UniProtKB" id="P08226"/>
    </source>
</evidence>
<evidence type="ECO:0000255" key="3"/>
<evidence type="ECO:0000305" key="4"/>
<keyword id="KW-0162">Chylomicron</keyword>
<keyword id="KW-0967">Endosome</keyword>
<keyword id="KW-0272">Extracellular matrix</keyword>
<keyword id="KW-0345">HDL</keyword>
<keyword id="KW-0358">Heparin-binding</keyword>
<keyword id="KW-0445">Lipid transport</keyword>
<keyword id="KW-0446">Lipid-binding</keyword>
<keyword id="KW-0558">Oxidation</keyword>
<keyword id="KW-0597">Phosphoprotein</keyword>
<keyword id="KW-1185">Reference proteome</keyword>
<keyword id="KW-0677">Repeat</keyword>
<keyword id="KW-0964">Secreted</keyword>
<keyword id="KW-0732">Signal</keyword>
<keyword id="KW-0813">Transport</keyword>
<keyword id="KW-0850">VLDL</keyword>
<organism>
    <name type="scientific">Macaca mulatta</name>
    <name type="common">Rhesus macaque</name>
    <dbReference type="NCBI Taxonomy" id="9544"/>
    <lineage>
        <taxon>Eukaryota</taxon>
        <taxon>Metazoa</taxon>
        <taxon>Chordata</taxon>
        <taxon>Craniata</taxon>
        <taxon>Vertebrata</taxon>
        <taxon>Euteleostomi</taxon>
        <taxon>Mammalia</taxon>
        <taxon>Eutheria</taxon>
        <taxon>Euarchontoglires</taxon>
        <taxon>Primates</taxon>
        <taxon>Haplorrhini</taxon>
        <taxon>Catarrhini</taxon>
        <taxon>Cercopithecidae</taxon>
        <taxon>Cercopithecinae</taxon>
        <taxon>Macaca</taxon>
    </lineage>
</organism>
<name>APOE_MACMU</name>
<sequence>MKVLWAALLVTFLAGCQAKVEQPVEPETEPELRQQAEGQSGQPWELALGRFWDYLRWVQTLSEQVQEELLSPQVTQELTTLMDETMKELKAYKSELEEQLSPVAEETRARLSKELQAAQARLGADMEDVRSRLVQYRSEVQAMLGQSTEELRARLASHLRKLRKRLLRDADDLQKRLARLGPLVEQGRVRAATVGSLASQPLQERAQAKLRARMEEMGSRTRDRLDEVKEQVAEVRAKLEEQAQQISLQAEAFQARLKSWFEPLVEDMQRQWAGLVEKVQAAVGASTAPVPSDNH</sequence>
<feature type="signal peptide" evidence="3">
    <location>
        <begin position="1"/>
        <end position="18"/>
    </location>
</feature>
<feature type="chain" id="PRO_0000191637" description="Apolipoprotein E">
    <location>
        <begin position="19"/>
        <end position="295"/>
    </location>
</feature>
<feature type="repeat" description="1">
    <location>
        <begin position="80"/>
        <end position="101"/>
    </location>
</feature>
<feature type="repeat" description="2">
    <location>
        <begin position="102"/>
        <end position="123"/>
    </location>
</feature>
<feature type="repeat" description="3">
    <location>
        <begin position="124"/>
        <end position="145"/>
    </location>
</feature>
<feature type="repeat" description="4">
    <location>
        <begin position="146"/>
        <end position="167"/>
    </location>
</feature>
<feature type="repeat" description="5">
    <location>
        <begin position="193"/>
        <end position="211"/>
    </location>
</feature>
<feature type="repeat" description="6">
    <location>
        <begin position="212"/>
        <end position="233"/>
    </location>
</feature>
<feature type="region of interest" description="6 X 22 AA approximate tandem repeats">
    <location>
        <begin position="80"/>
        <end position="233"/>
    </location>
</feature>
<feature type="region of interest" description="LDL and other lipoprotein receptors binding" evidence="1">
    <location>
        <begin position="158"/>
        <end position="168"/>
    </location>
</feature>
<feature type="region of interest" description="Lipid-binding and lipoprotein association" evidence="1">
    <location>
        <begin position="191"/>
        <end position="268"/>
    </location>
</feature>
<feature type="region of interest" description="Homooligomerization" evidence="1">
    <location>
        <begin position="244"/>
        <end position="295"/>
    </location>
</feature>
<feature type="region of interest" description="Specificity for association with VLDL" evidence="1">
    <location>
        <begin position="256"/>
        <end position="268"/>
    </location>
</feature>
<feature type="binding site" evidence="1">
    <location>
        <begin position="162"/>
        <end position="165"/>
    </location>
    <ligand>
        <name>heparin</name>
        <dbReference type="ChEBI" id="CHEBI:28304"/>
    </ligand>
</feature>
<feature type="modified residue" description="Methionine sulfoxide" evidence="2">
    <location>
        <position position="143"/>
    </location>
</feature>
<feature type="modified residue" description="Phosphoserine" evidence="1">
    <location>
        <position position="147"/>
    </location>
</feature>
<reference key="1">
    <citation type="journal article" date="2011" name="Nat. Biotechnol.">
        <title>Genome sequencing and comparison of two nonhuman primate animal models, the cynomolgus and Chinese rhesus macaques.</title>
        <authorList>
            <person name="Yan G."/>
            <person name="Zhang G."/>
            <person name="Fang X."/>
            <person name="Zhang Y."/>
            <person name="Li C."/>
            <person name="Ling F."/>
            <person name="Cooper D.N."/>
            <person name="Li Q."/>
            <person name="Li Y."/>
            <person name="van Gool A.J."/>
            <person name="Du H."/>
            <person name="Chen J."/>
            <person name="Chen R."/>
            <person name="Zhang P."/>
            <person name="Huang Z."/>
            <person name="Thompson J.R."/>
            <person name="Meng Y."/>
            <person name="Bai Y."/>
            <person name="Wang J."/>
            <person name="Zhuo M."/>
            <person name="Wang T."/>
            <person name="Huang Y."/>
            <person name="Wei L."/>
            <person name="Li J."/>
            <person name="Wang Z."/>
            <person name="Hu H."/>
            <person name="Yang P."/>
            <person name="Le L."/>
            <person name="Stenson P.D."/>
            <person name="Li B."/>
            <person name="Liu X."/>
            <person name="Ball E.V."/>
            <person name="An N."/>
            <person name="Huang Q."/>
            <person name="Zhang Y."/>
            <person name="Fan W."/>
            <person name="Zhang X."/>
            <person name="Li Y."/>
            <person name="Wang W."/>
            <person name="Katze M.G."/>
            <person name="Su B."/>
            <person name="Nielsen R."/>
            <person name="Yang H."/>
            <person name="Wang J."/>
            <person name="Wang X."/>
            <person name="Wang J."/>
        </authorList>
    </citation>
    <scope>NUCLEOTIDE SEQUENCE [LARGE SCALE GENOMIC DNA]</scope>
</reference>
<reference key="2">
    <citation type="journal article" date="1996" name="FEBS Lett.">
        <title>Cerebrovascular amyloidosis in squirrel monkeys and rhesus monkeys: apolipoprotein E genotype.</title>
        <authorList>
            <person name="Morelli L."/>
            <person name="Wei L."/>
            <person name="Amorim A."/>
            <person name="McDermid J."/>
            <person name="Abee C.R."/>
            <person name="Frangione B."/>
            <person name="Walker L.C."/>
            <person name="Levy E."/>
        </authorList>
    </citation>
    <scope>NUCLEOTIDE SEQUENCE [MRNA] OF 70-176</scope>
</reference>
<gene>
    <name type="primary">APOE</name>
</gene>
<accession>Q28502</accession>
<accession>G7NMA9</accession>